<comment type="function">
    <text evidence="1">Together with ARL2, plays a role in the nuclear translocation, retention and transcriptional activity of STAT3. May play a role as an effector of ARL2 (By similarity).</text>
</comment>
<comment type="subunit">
    <text evidence="1">Interacts with GTP bound ARL2 and ARL3; the complex ARL2-ARL2BP as well as ARL2BP alone, binds to SLC25A4/ANT1. Interaction with ARL2 may be required for cilia basal body localization (By similarity). Interacts with STAT3; interaction is enhanced with ARL2. Found in a complex with ARL2BP, ARL2 and SLC25A6. Found in a complex with ARL2, ARL2BP and SLC25A4. Interacts with STAT2, STAT3 and STAT4.</text>
</comment>
<comment type="subcellular location">
    <subcellularLocation>
        <location evidence="1">Cytoplasm</location>
    </subcellularLocation>
    <subcellularLocation>
        <location evidence="1">Mitochondrion intermembrane space</location>
    </subcellularLocation>
    <subcellularLocation>
        <location evidence="1">Cytoplasm</location>
        <location evidence="1">Cytoskeleton</location>
        <location evidence="1">Microtubule organizing center</location>
        <location evidence="1">Centrosome</location>
    </subcellularLocation>
    <subcellularLocation>
        <location evidence="1">Nucleus</location>
    </subcellularLocation>
    <subcellularLocation>
        <location evidence="1">Cytoplasm</location>
        <location evidence="1">Cytoskeleton</location>
        <location evidence="1">Spindle</location>
    </subcellularLocation>
    <subcellularLocation>
        <location evidence="1">Cytoplasm</location>
        <location evidence="1">Cytoskeleton</location>
        <location evidence="1">Cilium basal body</location>
    </subcellularLocation>
    <text evidence="1">Detected in the midbody matrix. Not detected in the Golgi, nucleus and on the mitotic spindle. Centrosome-associated throughout the cell cycle. Not detected to interphase microtubules. In retina photoreceptor cells, localized in the distal connecting cilia, basal body, ciliary-associated centriole, and ciliary rootlet. Interaction with ARL2 may be required for cilia basal body localization (By similarity). The complex formed with ARL2BP, ARL2 and SLC25A4 is expressed in mitochondria (By similarity).</text>
</comment>
<comment type="alternative products">
    <event type="alternative splicing"/>
    <isoform>
        <id>Q4V8C5-1</id>
        <name>1</name>
        <sequence type="displayed"/>
    </isoform>
    <isoform>
        <id>Q4V8C5-2</id>
        <name>2</name>
        <sequence type="described" ref="VSP_025321"/>
    </isoform>
</comment>
<comment type="tissue specificity">
    <text evidence="2">Ubiquitous with higher expression in brain, especially in hippocampus and cortex. Also expressed in lung, cerebellum, liver, kidney, spleen and heart (at protein level).</text>
</comment>
<comment type="similarity">
    <text evidence="4">Belongs to the ARL2BP family.</text>
</comment>
<reference key="1">
    <citation type="journal article" date="2004" name="Genome Res.">
        <title>The status, quality, and expansion of the NIH full-length cDNA project: the Mammalian Gene Collection (MGC).</title>
        <authorList>
            <consortium name="The MGC Project Team"/>
        </authorList>
    </citation>
    <scope>NUCLEOTIDE SEQUENCE [LARGE SCALE MRNA] (ISOFORMS 1 AND 2)</scope>
    <source>
        <tissue>Placenta</tissue>
        <tissue>Testis</tissue>
    </source>
</reference>
<reference key="2">
    <citation type="journal article" date="2002" name="Mol. Biol. Cell">
        <title>ARL2 and BART enter mitochondria and bind the adenine nucleotide transporter.</title>
        <authorList>
            <person name="Sharer J.D."/>
            <person name="Shern J.F."/>
            <person name="Van Valkenburgh H."/>
            <person name="Wallace D.C."/>
            <person name="Kahn R.A."/>
        </authorList>
    </citation>
    <scope>SUBCELLULAR LOCATION</scope>
    <scope>TISSUE SPECIFICITY</scope>
</reference>
<name>AR2BP_RAT</name>
<keyword id="KW-0025">Alternative splicing</keyword>
<keyword id="KW-0966">Cell projection</keyword>
<keyword id="KW-0969">Cilium</keyword>
<keyword id="KW-0963">Cytoplasm</keyword>
<keyword id="KW-0206">Cytoskeleton</keyword>
<keyword id="KW-0496">Mitochondrion</keyword>
<keyword id="KW-0539">Nucleus</keyword>
<keyword id="KW-1185">Reference proteome</keyword>
<feature type="chain" id="PRO_0000287117" description="ADP-ribosylation factor-like protein 2-binding protein">
    <location>
        <begin position="1"/>
        <end position="163"/>
    </location>
</feature>
<feature type="splice variant" id="VSP_025321" description="In isoform 2." evidence="3">
    <location>
        <begin position="1"/>
        <end position="32"/>
    </location>
</feature>
<dbReference type="EMBL" id="BC097448">
    <property type="protein sequence ID" value="AAH97448.1"/>
    <property type="molecule type" value="mRNA"/>
</dbReference>
<dbReference type="EMBL" id="CV113398">
    <property type="status" value="NOT_ANNOTATED_CDS"/>
    <property type="molecule type" value="mRNA"/>
</dbReference>
<dbReference type="RefSeq" id="NP_001020077.1">
    <molecule id="Q4V8C5-2"/>
    <property type="nucleotide sequence ID" value="NM_001024906.2"/>
</dbReference>
<dbReference type="RefSeq" id="NP_001386006.1">
    <molecule id="Q4V8C5-1"/>
    <property type="nucleotide sequence ID" value="NM_001399077.1"/>
</dbReference>
<dbReference type="RefSeq" id="XP_006255182.1">
    <property type="nucleotide sequence ID" value="XM_006255120.3"/>
</dbReference>
<dbReference type="RefSeq" id="XP_017456828.1">
    <property type="nucleotide sequence ID" value="XM_017601339.1"/>
</dbReference>
<dbReference type="SMR" id="Q4V8C5"/>
<dbReference type="FunCoup" id="Q4V8C5">
    <property type="interactions" value="2384"/>
</dbReference>
<dbReference type="STRING" id="10116.ENSRNOP00000073507"/>
<dbReference type="GlyGen" id="Q4V8C5">
    <property type="glycosylation" value="1 site"/>
</dbReference>
<dbReference type="PhosphoSitePlus" id="Q4V8C5"/>
<dbReference type="PaxDb" id="10116-ENSRNOP00000023455"/>
<dbReference type="Ensembl" id="ENSRNOT00000023455.6">
    <molecule id="Q4V8C5-1"/>
    <property type="protein sequence ID" value="ENSRNOP00000023455.6"/>
    <property type="gene ID" value="ENSRNOG00000016991.6"/>
</dbReference>
<dbReference type="GeneID" id="498910"/>
<dbReference type="KEGG" id="rno:498910"/>
<dbReference type="UCSC" id="RGD:1561471">
    <molecule id="Q4V8C5-1"/>
    <property type="organism name" value="rat"/>
</dbReference>
<dbReference type="AGR" id="RGD:1561471"/>
<dbReference type="CTD" id="23568"/>
<dbReference type="RGD" id="1561471">
    <property type="gene designation" value="Arl2bp"/>
</dbReference>
<dbReference type="eggNOG" id="ENOG502RYJD">
    <property type="taxonomic scope" value="Eukaryota"/>
</dbReference>
<dbReference type="GeneTree" id="ENSGT00390000015052"/>
<dbReference type="HOGENOM" id="CLU_116781_2_0_1"/>
<dbReference type="InParanoid" id="Q4V8C5"/>
<dbReference type="PhylomeDB" id="Q4V8C5"/>
<dbReference type="Reactome" id="R-RNO-83936">
    <property type="pathway name" value="Transport of nucleosides and free purine and pyrimidine bases across the plasma membrane"/>
</dbReference>
<dbReference type="PRO" id="PR:Q4V8C5"/>
<dbReference type="Proteomes" id="UP000002494">
    <property type="component" value="Chromosome 19"/>
</dbReference>
<dbReference type="Bgee" id="ENSRNOG00000016991">
    <property type="expression patterns" value="Expressed in Ammon's horn and 20 other cell types or tissues"/>
</dbReference>
<dbReference type="ExpressionAtlas" id="Q4V8C5">
    <property type="expression patterns" value="baseline and differential"/>
</dbReference>
<dbReference type="GO" id="GO:0005813">
    <property type="term" value="C:centrosome"/>
    <property type="evidence" value="ECO:0000266"/>
    <property type="project" value="RGD"/>
</dbReference>
<dbReference type="GO" id="GO:0005929">
    <property type="term" value="C:cilium"/>
    <property type="evidence" value="ECO:0007669"/>
    <property type="project" value="UniProtKB-KW"/>
</dbReference>
<dbReference type="GO" id="GO:0005737">
    <property type="term" value="C:cytoplasm"/>
    <property type="evidence" value="ECO:0000314"/>
    <property type="project" value="UniProtKB"/>
</dbReference>
<dbReference type="GO" id="GO:0030496">
    <property type="term" value="C:midbody"/>
    <property type="evidence" value="ECO:0000266"/>
    <property type="project" value="RGD"/>
</dbReference>
<dbReference type="GO" id="GO:0005758">
    <property type="term" value="C:mitochondrial intermembrane space"/>
    <property type="evidence" value="ECO:0000314"/>
    <property type="project" value="UniProtKB"/>
</dbReference>
<dbReference type="GO" id="GO:0005634">
    <property type="term" value="C:nucleus"/>
    <property type="evidence" value="ECO:0007669"/>
    <property type="project" value="UniProtKB-SubCell"/>
</dbReference>
<dbReference type="GO" id="GO:0005819">
    <property type="term" value="C:spindle"/>
    <property type="evidence" value="ECO:0007669"/>
    <property type="project" value="UniProtKB-SubCell"/>
</dbReference>
<dbReference type="GO" id="GO:0003713">
    <property type="term" value="F:transcription coactivator activity"/>
    <property type="evidence" value="ECO:0000250"/>
    <property type="project" value="UniProtKB"/>
</dbReference>
<dbReference type="GO" id="GO:0051457">
    <property type="term" value="P:maintenance of protein location in nucleus"/>
    <property type="evidence" value="ECO:0000250"/>
    <property type="project" value="UniProtKB"/>
</dbReference>
<dbReference type="GO" id="GO:0042531">
    <property type="term" value="P:positive regulation of tyrosine phosphorylation of STAT protein"/>
    <property type="evidence" value="ECO:0000250"/>
    <property type="project" value="UniProtKB"/>
</dbReference>
<dbReference type="FunFam" id="1.20.1520.10:FF:000002">
    <property type="entry name" value="ADP-ribosylation factor-like protein 2-binding protein isoform X1"/>
    <property type="match status" value="1"/>
</dbReference>
<dbReference type="Gene3D" id="1.20.1520.10">
    <property type="entry name" value="ADP-ribosylation factor-like 2-binding protein, domain"/>
    <property type="match status" value="1"/>
</dbReference>
<dbReference type="InterPro" id="IPR038849">
    <property type="entry name" value="ARL2BP"/>
</dbReference>
<dbReference type="InterPro" id="IPR023379">
    <property type="entry name" value="BART_dom"/>
</dbReference>
<dbReference type="InterPro" id="IPR042541">
    <property type="entry name" value="BART_sf"/>
</dbReference>
<dbReference type="PANTHER" id="PTHR15487">
    <property type="entry name" value="ADP-RIBOSYLATION FACTOR-LIKE PROTEIN 2-BINDING PROTEIN"/>
    <property type="match status" value="1"/>
</dbReference>
<dbReference type="PANTHER" id="PTHR15487:SF4">
    <property type="entry name" value="ADP-RIBOSYLATION FACTOR-LIKE PROTEIN 2-BINDING PROTEIN"/>
    <property type="match status" value="1"/>
</dbReference>
<dbReference type="Pfam" id="PF11527">
    <property type="entry name" value="ARL2_Bind_BART"/>
    <property type="match status" value="1"/>
</dbReference>
<sequence length="163" mass="18683">MDALEEESFALSFSSASDAEFDAVVGCLEDIIMDAEFQLLQRSFMDKYYQEFEDTEENKLTYTPIFNEYISLVEKYIEEQLLERIPGFNMAAFTTTLQHHKDEVAGDIFDMLLTFTDFLAFKEMFLDYRAEKEGRGLDLSSGLVVTSLCKSSSTPASQNNLRH</sequence>
<gene>
    <name type="primary">Arl2bp</name>
    <name type="synonym">Bart</name>
    <name type="synonym">Bart1</name>
</gene>
<protein>
    <recommendedName>
        <fullName>ADP-ribosylation factor-like protein 2-binding protein</fullName>
        <shortName>ARF-like 2-binding protein</shortName>
    </recommendedName>
    <alternativeName>
        <fullName>Binder of ARF2 protein 1</fullName>
    </alternativeName>
</protein>
<organism>
    <name type="scientific">Rattus norvegicus</name>
    <name type="common">Rat</name>
    <dbReference type="NCBI Taxonomy" id="10116"/>
    <lineage>
        <taxon>Eukaryota</taxon>
        <taxon>Metazoa</taxon>
        <taxon>Chordata</taxon>
        <taxon>Craniata</taxon>
        <taxon>Vertebrata</taxon>
        <taxon>Euteleostomi</taxon>
        <taxon>Mammalia</taxon>
        <taxon>Eutheria</taxon>
        <taxon>Euarchontoglires</taxon>
        <taxon>Glires</taxon>
        <taxon>Rodentia</taxon>
        <taxon>Myomorpha</taxon>
        <taxon>Muroidea</taxon>
        <taxon>Muridae</taxon>
        <taxon>Murinae</taxon>
        <taxon>Rattus</taxon>
    </lineage>
</organism>
<accession>Q4V8C5</accession>
<proteinExistence type="evidence at protein level"/>
<evidence type="ECO:0000250" key="1"/>
<evidence type="ECO:0000269" key="2">
    <source>
    </source>
</evidence>
<evidence type="ECO:0000303" key="3">
    <source>
    </source>
</evidence>
<evidence type="ECO:0000305" key="4"/>